<accession>O46576</accession>
<keyword id="KW-0891">Chondrogenesis</keyword>
<keyword id="KW-0165">Cleavage on pair of basic residues</keyword>
<keyword id="KW-0202">Cytokine</keyword>
<keyword id="KW-0217">Developmental protein</keyword>
<keyword id="KW-0221">Differentiation</keyword>
<keyword id="KW-1015">Disulfide bond</keyword>
<keyword id="KW-0272">Extracellular matrix</keyword>
<keyword id="KW-0325">Glycoprotein</keyword>
<keyword id="KW-0339">Growth factor</keyword>
<keyword id="KW-0892">Osteogenesis</keyword>
<keyword id="KW-0597">Phosphoprotein</keyword>
<keyword id="KW-1185">Reference proteome</keyword>
<keyword id="KW-0964">Secreted</keyword>
<keyword id="KW-0732">Signal</keyword>
<reference key="1">
    <citation type="submission" date="1998-01" db="EMBL/GenBank/DDBJ databases">
        <title>Cloning and expression of BMP-2/-4 from rabbit ocular ciliary epithelium.</title>
        <authorList>
            <person name="Wan X.L."/>
            <person name="Sears J."/>
            <person name="Chen S."/>
            <person name="Sears M."/>
        </authorList>
    </citation>
    <scope>NUCLEOTIDE SEQUENCE [MRNA]</scope>
    <source>
        <strain>New Zealand white</strain>
        <tissue>Ocular ciliary epithelium</tissue>
    </source>
</reference>
<comment type="function">
    <text evidence="2 3">Growth factor of the TGF-beta superfamily that plays essential roles in many developmental processes, including neurogenesis, vascular development, angiogenesis and osteogenesis (By similarity). Acts in concert with PTHLH/PTHRP to stimulate ductal outgrowth during embryonic mammary development and to inhibit hair follicle induction (By similarity). Initiates the canonical BMP signaling cascade by associating with type I receptor BMPR1A and type II receptor BMPR2. Once all three components are bound together in a complex at the cell surface, BMPR2 phosphorylates and activates BMPR1A. In turn, BMPR1A propagates signal by phosphorylating SMAD1/5/8 that travel to the nucleus and act as activators and repressors of transcription of target genes. Positively regulates the expression of odontogenic development regulator MSX1 via inducing the IPO7-mediated import of SMAD1 to the nucleus (By similarity). Required for MSX1-mediated mesenchymal molar tooth bud development beyond the bud stage, via promoting Wnt signaling (By similarity). Acts as a positive regulator of odontoblast differentiation during mesenchymal tooth germ formation, expression is repressed during the bell stage by MSX1-mediated inhibition of CTNNB1 signaling (By similarity). Able to induce its own expression in dental mesenchymal cells and also in the neighboring dental epithelial cells via an MSX1-mediated pathway (By similarity). Can also signal through non-canonical BMP pathways such as ERK/MAP kinase, PI3K/Akt, or SRC cascades. For example, induces SRC phosphorylation which, in turn, activates VEGFR2, leading to an angiogenic response (By similarity).</text>
</comment>
<comment type="subunit">
    <text evidence="2 3">Homodimer; disulfide-linked (By similarity). Interacts with GREM2. Part of a complex consisting of TWSG1 and CHRD. Interacts with the serine proteases, HTRA1 and HTRA3; the interaction with either inhibits BMP4-mediated signaling. The HTRA protease activity is required for this inhibition (By similarity). Interacts with SOSTDC1. Interacts with FBN1 (via N-terminal domain) and FBN2. Interacts with type I receptor BMPR1A. Interacts with type II receptor BMPR2. Interacts with FSTL1; this interaction inhibits the activation of the BMP4/Smad1/5/8 signaling pathway (By similarity). Interacts with SCUBE3 (By similarity). Interacts with TGFBR3 (By similarity).</text>
</comment>
<comment type="subcellular location">
    <subcellularLocation>
        <location evidence="1">Secreted</location>
        <location evidence="1">Extracellular space</location>
        <location evidence="1">Extracellular matrix</location>
    </subcellularLocation>
</comment>
<comment type="similarity">
    <text evidence="6">Belongs to the TGF-beta family.</text>
</comment>
<sequence>MIPGNRMLMVVLLCQVLLGGASHASLIPETGKKKVAEIQGHAGGRRSGQSHELLRDFEATLLQMFGLRRHPQPSKSAVIPDYMRDLYRLQSGEEEEEEQMPSGGLEYPERPASRANTVRSFHHEEHLENIPGTSENSAFRFLFNLSSIPENEAISSAELRLFREQVDQGPDWERGFHRINIYEVMKPPAEAVPGHLITRLLDTRLVHHNVTRWETFDVSPAVLRWTREKQPNHGLAVEVTHFHHTRTHQGQHVRLSRSLLQGSGDWAQFRPLLVTFGHDGRGHALTRRRRAKRSLKHHPQRARKKNKNCRRHALYVDFSDVGWNDWIVAPPGYQAFYCHGDCPFPLADHFNSTNHAIVQTLVNSVNSSIPKACCVPTELSAISMLYLDEYDKVVLKNYQEMVVEGCGCR</sequence>
<evidence type="ECO:0000250" key="1"/>
<evidence type="ECO:0000250" key="2">
    <source>
        <dbReference type="UniProtKB" id="P12644"/>
    </source>
</evidence>
<evidence type="ECO:0000250" key="3">
    <source>
        <dbReference type="UniProtKB" id="P21275"/>
    </source>
</evidence>
<evidence type="ECO:0000255" key="4"/>
<evidence type="ECO:0000256" key="5">
    <source>
        <dbReference type="SAM" id="MobiDB-lite"/>
    </source>
</evidence>
<evidence type="ECO:0000305" key="6"/>
<proteinExistence type="evidence at transcript level"/>
<name>BMP4_RABIT</name>
<gene>
    <name type="primary">BMP4</name>
    <name type="synonym">BMP-4</name>
</gene>
<dbReference type="EMBL" id="AF042497">
    <property type="protein sequence ID" value="AAB97467.1"/>
    <property type="molecule type" value="mRNA"/>
</dbReference>
<dbReference type="SMR" id="O46576"/>
<dbReference type="FunCoup" id="O46576">
    <property type="interactions" value="57"/>
</dbReference>
<dbReference type="STRING" id="9986.ENSOCUP00000009545"/>
<dbReference type="GlyCosmos" id="O46576">
    <property type="glycosylation" value="4 sites, No reported glycans"/>
</dbReference>
<dbReference type="PaxDb" id="9986-ENSOCUP00000009545"/>
<dbReference type="eggNOG" id="KOG3900">
    <property type="taxonomic scope" value="Eukaryota"/>
</dbReference>
<dbReference type="InParanoid" id="O46576"/>
<dbReference type="Proteomes" id="UP000001811">
    <property type="component" value="Unplaced"/>
</dbReference>
<dbReference type="GO" id="GO:0005615">
    <property type="term" value="C:extracellular space"/>
    <property type="evidence" value="ECO:0007669"/>
    <property type="project" value="UniProtKB-KW"/>
</dbReference>
<dbReference type="GO" id="GO:0070700">
    <property type="term" value="F:BMP receptor binding"/>
    <property type="evidence" value="ECO:0000250"/>
    <property type="project" value="UniProtKB"/>
</dbReference>
<dbReference type="GO" id="GO:0005125">
    <property type="term" value="F:cytokine activity"/>
    <property type="evidence" value="ECO:0007669"/>
    <property type="project" value="UniProtKB-KW"/>
</dbReference>
<dbReference type="GO" id="GO:0008083">
    <property type="term" value="F:growth factor activity"/>
    <property type="evidence" value="ECO:0007669"/>
    <property type="project" value="UniProtKB-KW"/>
</dbReference>
<dbReference type="GO" id="GO:0002043">
    <property type="term" value="P:blood vessel endothelial cell proliferation involved in sprouting angiogenesis"/>
    <property type="evidence" value="ECO:0000250"/>
    <property type="project" value="UniProtKB"/>
</dbReference>
<dbReference type="GO" id="GO:0002062">
    <property type="term" value="P:chondrocyte differentiation"/>
    <property type="evidence" value="ECO:0000250"/>
    <property type="project" value="UniProtKB"/>
</dbReference>
<dbReference type="GO" id="GO:0035993">
    <property type="term" value="P:deltoid tuberosity development"/>
    <property type="evidence" value="ECO:0000250"/>
    <property type="project" value="UniProtKB"/>
</dbReference>
<dbReference type="GO" id="GO:0001958">
    <property type="term" value="P:endochondral ossification"/>
    <property type="evidence" value="ECO:0000250"/>
    <property type="project" value="UniProtKB"/>
</dbReference>
<dbReference type="GO" id="GO:0072104">
    <property type="term" value="P:glomerular capillary formation"/>
    <property type="evidence" value="ECO:0000250"/>
    <property type="project" value="UniProtKB"/>
</dbReference>
<dbReference type="GO" id="GO:0003129">
    <property type="term" value="P:heart induction"/>
    <property type="evidence" value="ECO:0000250"/>
    <property type="project" value="UniProtKB"/>
</dbReference>
<dbReference type="GO" id="GO:0002244">
    <property type="term" value="P:hematopoietic progenitor cell differentiation"/>
    <property type="evidence" value="ECO:0000250"/>
    <property type="project" value="UniProtKB"/>
</dbReference>
<dbReference type="GO" id="GO:0001822">
    <property type="term" value="P:kidney development"/>
    <property type="evidence" value="ECO:0000250"/>
    <property type="project" value="UniProtKB"/>
</dbReference>
<dbReference type="GO" id="GO:0060426">
    <property type="term" value="P:lung vasculature development"/>
    <property type="evidence" value="ECO:0000250"/>
    <property type="project" value="UniProtKB"/>
</dbReference>
<dbReference type="GO" id="GO:0002320">
    <property type="term" value="P:lymphoid progenitor cell differentiation"/>
    <property type="evidence" value="ECO:0000250"/>
    <property type="project" value="UniProtKB"/>
</dbReference>
<dbReference type="GO" id="GO:0090191">
    <property type="term" value="P:negative regulation of branching involved in ureteric bud morphogenesis"/>
    <property type="evidence" value="ECO:0000250"/>
    <property type="project" value="UniProtKB"/>
</dbReference>
<dbReference type="GO" id="GO:0008285">
    <property type="term" value="P:negative regulation of cell population proliferation"/>
    <property type="evidence" value="ECO:0000250"/>
    <property type="project" value="UniProtKB"/>
</dbReference>
<dbReference type="GO" id="GO:0072125">
    <property type="term" value="P:negative regulation of glomerular mesangial cell proliferation"/>
    <property type="evidence" value="ECO:0000250"/>
    <property type="project" value="UniProtKB"/>
</dbReference>
<dbReference type="GO" id="GO:0033088">
    <property type="term" value="P:negative regulation of immature T cell proliferation in thymus"/>
    <property type="evidence" value="ECO:0000250"/>
    <property type="project" value="UniProtKB"/>
</dbReference>
<dbReference type="GO" id="GO:0072200">
    <property type="term" value="P:negative regulation of mesenchymal cell proliferation involved in ureter development"/>
    <property type="evidence" value="ECO:0000250"/>
    <property type="project" value="UniProtKB"/>
</dbReference>
<dbReference type="GO" id="GO:2000007">
    <property type="term" value="P:negative regulation of metanephric comma-shaped body morphogenesis"/>
    <property type="evidence" value="ECO:0000250"/>
    <property type="project" value="UniProtKB"/>
</dbReference>
<dbReference type="GO" id="GO:2000005">
    <property type="term" value="P:negative regulation of metanephric S-shaped body morphogenesis"/>
    <property type="evidence" value="ECO:0000250"/>
    <property type="project" value="UniProtKB"/>
</dbReference>
<dbReference type="GO" id="GO:0045839">
    <property type="term" value="P:negative regulation of mitotic nuclear division"/>
    <property type="evidence" value="ECO:0000250"/>
    <property type="project" value="UniProtKB"/>
</dbReference>
<dbReference type="GO" id="GO:0070244">
    <property type="term" value="P:negative regulation of thymocyte apoptotic process"/>
    <property type="evidence" value="ECO:0000250"/>
    <property type="project" value="UniProtKB"/>
</dbReference>
<dbReference type="GO" id="GO:0001649">
    <property type="term" value="P:osteoblast differentiation"/>
    <property type="evidence" value="ECO:0000250"/>
    <property type="project" value="UniProtKB"/>
</dbReference>
<dbReference type="GO" id="GO:0050918">
    <property type="term" value="P:positive chemotaxis"/>
    <property type="evidence" value="ECO:0000250"/>
    <property type="project" value="UniProtKB"/>
</dbReference>
<dbReference type="GO" id="GO:0030513">
    <property type="term" value="P:positive regulation of BMP signaling pathway"/>
    <property type="evidence" value="ECO:0000250"/>
    <property type="project" value="UniProtKB"/>
</dbReference>
<dbReference type="GO" id="GO:0061047">
    <property type="term" value="P:positive regulation of branching involved in lung morphogenesis"/>
    <property type="evidence" value="ECO:0000250"/>
    <property type="project" value="UniProtKB"/>
</dbReference>
<dbReference type="GO" id="GO:0055020">
    <property type="term" value="P:positive regulation of cardiac muscle fiber development"/>
    <property type="evidence" value="ECO:0000250"/>
    <property type="project" value="UniProtKB"/>
</dbReference>
<dbReference type="GO" id="GO:0008284">
    <property type="term" value="P:positive regulation of cell population proliferation"/>
    <property type="evidence" value="ECO:0000250"/>
    <property type="project" value="UniProtKB"/>
</dbReference>
<dbReference type="GO" id="GO:0032967">
    <property type="term" value="P:positive regulation of collagen biosynthetic process"/>
    <property type="evidence" value="ECO:0000250"/>
    <property type="project" value="UniProtKB"/>
</dbReference>
<dbReference type="GO" id="GO:0045893">
    <property type="term" value="P:positive regulation of DNA-templated transcription"/>
    <property type="evidence" value="ECO:0000250"/>
    <property type="project" value="UniProtKB"/>
</dbReference>
<dbReference type="GO" id="GO:0045606">
    <property type="term" value="P:positive regulation of epidermal cell differentiation"/>
    <property type="evidence" value="ECO:0000250"/>
    <property type="project" value="CAFA"/>
</dbReference>
<dbReference type="GO" id="GO:0050679">
    <property type="term" value="P:positive regulation of epithelial cell proliferation"/>
    <property type="evidence" value="ECO:0000250"/>
    <property type="project" value="UniProtKB"/>
</dbReference>
<dbReference type="GO" id="GO:1901331">
    <property type="term" value="P:positive regulation of odontoblast differentiation"/>
    <property type="evidence" value="ECO:0000250"/>
    <property type="project" value="UniProtKB"/>
</dbReference>
<dbReference type="GO" id="GO:1900182">
    <property type="term" value="P:positive regulation of protein localization to nucleus"/>
    <property type="evidence" value="ECO:0000250"/>
    <property type="project" value="UniProtKB"/>
</dbReference>
<dbReference type="GO" id="GO:0010453">
    <property type="term" value="P:regulation of cell fate commitment"/>
    <property type="evidence" value="ECO:0000250"/>
    <property type="project" value="CAFA"/>
</dbReference>
<dbReference type="GO" id="GO:0003139">
    <property type="term" value="P:secondary heart field specification"/>
    <property type="evidence" value="ECO:0000250"/>
    <property type="project" value="UniProtKB"/>
</dbReference>
<dbReference type="GO" id="GO:0035990">
    <property type="term" value="P:tendon cell differentiation"/>
    <property type="evidence" value="ECO:0000250"/>
    <property type="project" value="UniProtKB"/>
</dbReference>
<dbReference type="GO" id="GO:0003323">
    <property type="term" value="P:type B pancreatic cell development"/>
    <property type="evidence" value="ECO:0000250"/>
    <property type="project" value="UniProtKB"/>
</dbReference>
<dbReference type="CDD" id="cd19391">
    <property type="entry name" value="TGF_beta_BMP4_BMP2B"/>
    <property type="match status" value="1"/>
</dbReference>
<dbReference type="FunFam" id="2.10.90.10:FF:000103">
    <property type="entry name" value="Bone morphogenetic protein 16"/>
    <property type="match status" value="1"/>
</dbReference>
<dbReference type="FunFam" id="2.60.120.970:FF:000005">
    <property type="entry name" value="Bone morphogenetic protein 4"/>
    <property type="match status" value="1"/>
</dbReference>
<dbReference type="Gene3D" id="2.60.120.970">
    <property type="match status" value="1"/>
</dbReference>
<dbReference type="Gene3D" id="2.10.90.10">
    <property type="entry name" value="Cystine-knot cytokines"/>
    <property type="match status" value="1"/>
</dbReference>
<dbReference type="InterPro" id="IPR047833">
    <property type="entry name" value="BMP4_TGF_beta-like"/>
</dbReference>
<dbReference type="InterPro" id="IPR029034">
    <property type="entry name" value="Cystine-knot_cytokine"/>
</dbReference>
<dbReference type="InterPro" id="IPR001839">
    <property type="entry name" value="TGF-b_C"/>
</dbReference>
<dbReference type="InterPro" id="IPR001111">
    <property type="entry name" value="TGF-b_propeptide"/>
</dbReference>
<dbReference type="InterPro" id="IPR015615">
    <property type="entry name" value="TGF-beta-rel"/>
</dbReference>
<dbReference type="InterPro" id="IPR017948">
    <property type="entry name" value="TGFb_CS"/>
</dbReference>
<dbReference type="PANTHER" id="PTHR11848:SF165">
    <property type="entry name" value="BONE MORPHOGENETIC PROTEIN 4"/>
    <property type="match status" value="1"/>
</dbReference>
<dbReference type="PANTHER" id="PTHR11848">
    <property type="entry name" value="TGF-BETA FAMILY"/>
    <property type="match status" value="1"/>
</dbReference>
<dbReference type="Pfam" id="PF00019">
    <property type="entry name" value="TGF_beta"/>
    <property type="match status" value="1"/>
</dbReference>
<dbReference type="Pfam" id="PF00688">
    <property type="entry name" value="TGFb_propeptide"/>
    <property type="match status" value="1"/>
</dbReference>
<dbReference type="SMART" id="SM00204">
    <property type="entry name" value="TGFB"/>
    <property type="match status" value="1"/>
</dbReference>
<dbReference type="SUPFAM" id="SSF57501">
    <property type="entry name" value="Cystine-knot cytokines"/>
    <property type="match status" value="1"/>
</dbReference>
<dbReference type="PROSITE" id="PS00250">
    <property type="entry name" value="TGF_BETA_1"/>
    <property type="match status" value="1"/>
</dbReference>
<dbReference type="PROSITE" id="PS51362">
    <property type="entry name" value="TGF_BETA_2"/>
    <property type="match status" value="1"/>
</dbReference>
<protein>
    <recommendedName>
        <fullName evidence="3">Bone morphogenetic protein 4</fullName>
        <shortName evidence="3">BMP-4</shortName>
    </recommendedName>
</protein>
<feature type="signal peptide" evidence="4">
    <location>
        <begin position="1"/>
        <end position="19"/>
    </location>
</feature>
<feature type="propeptide" id="PRO_0000033860" evidence="1">
    <location>
        <begin position="20"/>
        <end position="293"/>
    </location>
</feature>
<feature type="chain" id="PRO_0000033861" description="Bone morphogenetic protein 4">
    <location>
        <begin position="294"/>
        <end position="409"/>
    </location>
</feature>
<feature type="region of interest" description="Disordered" evidence="5">
    <location>
        <begin position="91"/>
        <end position="110"/>
    </location>
</feature>
<feature type="modified residue" description="Phosphoserine" evidence="2">
    <location>
        <position position="91"/>
    </location>
</feature>
<feature type="glycosylation site" description="N-linked (GlcNAc...) asparagine" evidence="4">
    <location>
        <position position="144"/>
    </location>
</feature>
<feature type="glycosylation site" description="N-linked (GlcNAc...) asparagine" evidence="4">
    <location>
        <position position="209"/>
    </location>
</feature>
<feature type="glycosylation site" description="N-linked (GlcNAc...) asparagine" evidence="4">
    <location>
        <position position="351"/>
    </location>
</feature>
<feature type="glycosylation site" description="N-linked (GlcNAc...) asparagine" evidence="4">
    <location>
        <position position="366"/>
    </location>
</feature>
<feature type="disulfide bond" evidence="1">
    <location>
        <begin position="309"/>
        <end position="374"/>
    </location>
</feature>
<feature type="disulfide bond" evidence="1">
    <location>
        <begin position="338"/>
        <end position="406"/>
    </location>
</feature>
<feature type="disulfide bond" evidence="1">
    <location>
        <begin position="342"/>
        <end position="408"/>
    </location>
</feature>
<feature type="disulfide bond" description="Interchain" evidence="1">
    <location>
        <position position="373"/>
    </location>
</feature>
<organism>
    <name type="scientific">Oryctolagus cuniculus</name>
    <name type="common">Rabbit</name>
    <dbReference type="NCBI Taxonomy" id="9986"/>
    <lineage>
        <taxon>Eukaryota</taxon>
        <taxon>Metazoa</taxon>
        <taxon>Chordata</taxon>
        <taxon>Craniata</taxon>
        <taxon>Vertebrata</taxon>
        <taxon>Euteleostomi</taxon>
        <taxon>Mammalia</taxon>
        <taxon>Eutheria</taxon>
        <taxon>Euarchontoglires</taxon>
        <taxon>Glires</taxon>
        <taxon>Lagomorpha</taxon>
        <taxon>Leporidae</taxon>
        <taxon>Oryctolagus</taxon>
    </lineage>
</organism>